<accession>P47162</accession>
<accession>A0A1S0T089</accession>
<protein>
    <recommendedName>
        <fullName>Uncharacterized protein YJR128W</fullName>
    </recommendedName>
</protein>
<keyword id="KW-1185">Reference proteome</keyword>
<reference key="1">
    <citation type="journal article" date="1996" name="EMBO J.">
        <title>Complete nucleotide sequence of Saccharomyces cerevisiae chromosome X.</title>
        <authorList>
            <person name="Galibert F."/>
            <person name="Alexandraki D."/>
            <person name="Baur A."/>
            <person name="Boles E."/>
            <person name="Chalwatzis N."/>
            <person name="Chuat J.-C."/>
            <person name="Coster F."/>
            <person name="Cziepluch C."/>
            <person name="de Haan M."/>
            <person name="Domdey H."/>
            <person name="Durand P."/>
            <person name="Entian K.-D."/>
            <person name="Gatius M."/>
            <person name="Goffeau A."/>
            <person name="Grivell L.A."/>
            <person name="Hennemann A."/>
            <person name="Herbert C.J."/>
            <person name="Heumann K."/>
            <person name="Hilger F."/>
            <person name="Hollenberg C.P."/>
            <person name="Huang M.-E."/>
            <person name="Jacq C."/>
            <person name="Jauniaux J.-C."/>
            <person name="Katsoulou C."/>
            <person name="Kirchrath L."/>
            <person name="Kleine K."/>
            <person name="Kordes E."/>
            <person name="Koetter P."/>
            <person name="Liebl S."/>
            <person name="Louis E.J."/>
            <person name="Manus V."/>
            <person name="Mewes H.-W."/>
            <person name="Miosga T."/>
            <person name="Obermaier B."/>
            <person name="Perea J."/>
            <person name="Pohl T.M."/>
            <person name="Portetelle D."/>
            <person name="Pujol A."/>
            <person name="Purnelle B."/>
            <person name="Ramezani Rad M."/>
            <person name="Rasmussen S.W."/>
            <person name="Rose M."/>
            <person name="Rossau R."/>
            <person name="Schaaff-Gerstenschlaeger I."/>
            <person name="Smits P.H.M."/>
            <person name="Scarcez T."/>
            <person name="Soriano N."/>
            <person name="To Van D."/>
            <person name="Tzermia M."/>
            <person name="Van Broekhoven A."/>
            <person name="Vandenbol M."/>
            <person name="Wedler H."/>
            <person name="von Wettstein D."/>
            <person name="Wambutt R."/>
            <person name="Zagulski M."/>
            <person name="Zollner A."/>
            <person name="Karpfinger-Hartl L."/>
        </authorList>
    </citation>
    <scope>NUCLEOTIDE SEQUENCE [LARGE SCALE GENOMIC DNA]</scope>
    <source>
        <strain>ATCC 204508 / S288c</strain>
    </source>
</reference>
<reference key="2">
    <citation type="journal article" date="2014" name="G3 (Bethesda)">
        <title>The reference genome sequence of Saccharomyces cerevisiae: Then and now.</title>
        <authorList>
            <person name="Engel S.R."/>
            <person name="Dietrich F.S."/>
            <person name="Fisk D.G."/>
            <person name="Binkley G."/>
            <person name="Balakrishnan R."/>
            <person name="Costanzo M.C."/>
            <person name="Dwight S.S."/>
            <person name="Hitz B.C."/>
            <person name="Karra K."/>
            <person name="Nash R.S."/>
            <person name="Weng S."/>
            <person name="Wong E.D."/>
            <person name="Lloyd P."/>
            <person name="Skrzypek M.S."/>
            <person name="Miyasato S.R."/>
            <person name="Simison M."/>
            <person name="Cherry J.M."/>
        </authorList>
    </citation>
    <scope>GENOME REANNOTATION</scope>
    <source>
        <strain>ATCC 204508 / S288c</strain>
    </source>
</reference>
<organism>
    <name type="scientific">Saccharomyces cerevisiae (strain ATCC 204508 / S288c)</name>
    <name type="common">Baker's yeast</name>
    <dbReference type="NCBI Taxonomy" id="559292"/>
    <lineage>
        <taxon>Eukaryota</taxon>
        <taxon>Fungi</taxon>
        <taxon>Dikarya</taxon>
        <taxon>Ascomycota</taxon>
        <taxon>Saccharomycotina</taxon>
        <taxon>Saccharomycetes</taxon>
        <taxon>Saccharomycetales</taxon>
        <taxon>Saccharomycetaceae</taxon>
        <taxon>Saccharomyces</taxon>
    </lineage>
</organism>
<name>YJ98_YEAST</name>
<dbReference type="EMBL" id="Z49627">
    <property type="protein sequence ID" value="CAA89659.1"/>
    <property type="molecule type" value="Genomic_DNA"/>
</dbReference>
<dbReference type="EMBL" id="BK006943">
    <property type="protein sequence ID" value="DAA80308.1"/>
    <property type="molecule type" value="Genomic_DNA"/>
</dbReference>
<dbReference type="PIR" id="S57151">
    <property type="entry name" value="S57151"/>
</dbReference>
<dbReference type="RefSeq" id="NP_001335788.1">
    <property type="nucleotide sequence ID" value="NM_001348848.1"/>
</dbReference>
<dbReference type="FunCoup" id="P47162">
    <property type="interactions" value="27"/>
</dbReference>
<dbReference type="PaxDb" id="4932-YJR128W"/>
<dbReference type="TopDownProteomics" id="P47162"/>
<dbReference type="EnsemblFungi" id="YJR128W_mRNA">
    <property type="protein sequence ID" value="YJR128W"/>
    <property type="gene ID" value="YJR128W"/>
</dbReference>
<dbReference type="GeneID" id="853591"/>
<dbReference type="AGR" id="SGD:S000003889"/>
<dbReference type="SGD" id="S000003889">
    <property type="gene designation" value="YJR128W"/>
</dbReference>
<dbReference type="HOGENOM" id="CLU_2063327_0_0_1"/>
<dbReference type="InParanoid" id="P47162"/>
<dbReference type="PRO" id="PR:P47162"/>
<dbReference type="Proteomes" id="UP000002311">
    <property type="component" value="Chromosome X"/>
</dbReference>
<dbReference type="RNAct" id="P47162">
    <property type="molecule type" value="protein"/>
</dbReference>
<gene>
    <name type="ordered locus">YJR128W</name>
    <name type="ORF">J2059</name>
</gene>
<evidence type="ECO:0000256" key="1">
    <source>
        <dbReference type="SAM" id="MobiDB-lite"/>
    </source>
</evidence>
<feature type="chain" id="PRO_0000203119" description="Uncharacterized protein YJR128W">
    <location>
        <begin position="1"/>
        <end position="119"/>
    </location>
</feature>
<feature type="region of interest" description="Disordered" evidence="1">
    <location>
        <begin position="1"/>
        <end position="22"/>
    </location>
</feature>
<sequence length="119" mass="13497">MQGQAGKRKTDGKVPSNTEQNCPDLFERPRLVCIMQAPLVQMRTVPSETGHFPKIISLNRSCSRSYLLSMPHTQLPYPLPYGEFPRCSTVRRDHNFPCTLYSAPGVVHPRLCVFSCMMI</sequence>
<proteinExistence type="predicted"/>